<accession>B2TUI5</accession>
<keyword id="KW-0030">Aminoacyl-tRNA synthetase</keyword>
<keyword id="KW-0067">ATP-binding</keyword>
<keyword id="KW-0963">Cytoplasm</keyword>
<keyword id="KW-0436">Ligase</keyword>
<keyword id="KW-0547">Nucleotide-binding</keyword>
<keyword id="KW-0648">Protein biosynthesis</keyword>
<keyword id="KW-1185">Reference proteome</keyword>
<dbReference type="EC" id="6.1.1.11" evidence="1"/>
<dbReference type="EMBL" id="CP001063">
    <property type="protein sequence ID" value="ACD06650.1"/>
    <property type="molecule type" value="Genomic_DNA"/>
</dbReference>
<dbReference type="RefSeq" id="WP_000886694.1">
    <property type="nucleotide sequence ID" value="NC_010658.1"/>
</dbReference>
<dbReference type="SMR" id="B2TUI5"/>
<dbReference type="STRING" id="344609.SbBS512_E2435"/>
<dbReference type="KEGG" id="sbc:SbBS512_E2435"/>
<dbReference type="HOGENOM" id="CLU_023797_1_1_6"/>
<dbReference type="UniPathway" id="UPA00906">
    <property type="reaction ID" value="UER00895"/>
</dbReference>
<dbReference type="Proteomes" id="UP000001030">
    <property type="component" value="Chromosome"/>
</dbReference>
<dbReference type="GO" id="GO:0005737">
    <property type="term" value="C:cytoplasm"/>
    <property type="evidence" value="ECO:0007669"/>
    <property type="project" value="UniProtKB-SubCell"/>
</dbReference>
<dbReference type="GO" id="GO:0005524">
    <property type="term" value="F:ATP binding"/>
    <property type="evidence" value="ECO:0007669"/>
    <property type="project" value="UniProtKB-UniRule"/>
</dbReference>
<dbReference type="GO" id="GO:0004828">
    <property type="term" value="F:serine-tRNA ligase activity"/>
    <property type="evidence" value="ECO:0007669"/>
    <property type="project" value="UniProtKB-UniRule"/>
</dbReference>
<dbReference type="GO" id="GO:0016260">
    <property type="term" value="P:selenocysteine biosynthetic process"/>
    <property type="evidence" value="ECO:0007669"/>
    <property type="project" value="UniProtKB-UniRule"/>
</dbReference>
<dbReference type="GO" id="GO:0006434">
    <property type="term" value="P:seryl-tRNA aminoacylation"/>
    <property type="evidence" value="ECO:0007669"/>
    <property type="project" value="UniProtKB-UniRule"/>
</dbReference>
<dbReference type="CDD" id="cd00770">
    <property type="entry name" value="SerRS_core"/>
    <property type="match status" value="1"/>
</dbReference>
<dbReference type="FunFam" id="1.10.287.40:FF:000001">
    <property type="entry name" value="Serine--tRNA ligase"/>
    <property type="match status" value="1"/>
</dbReference>
<dbReference type="FunFam" id="3.30.930.10:FF:000018">
    <property type="entry name" value="Serine--tRNA ligase"/>
    <property type="match status" value="1"/>
</dbReference>
<dbReference type="Gene3D" id="3.30.930.10">
    <property type="entry name" value="Bira Bifunctional Protein, Domain 2"/>
    <property type="match status" value="1"/>
</dbReference>
<dbReference type="Gene3D" id="1.10.287.40">
    <property type="entry name" value="Serine-tRNA synthetase, tRNA binding domain"/>
    <property type="match status" value="1"/>
</dbReference>
<dbReference type="HAMAP" id="MF_00176">
    <property type="entry name" value="Ser_tRNA_synth_type1"/>
    <property type="match status" value="1"/>
</dbReference>
<dbReference type="InterPro" id="IPR002314">
    <property type="entry name" value="aa-tRNA-synt_IIb"/>
</dbReference>
<dbReference type="InterPro" id="IPR006195">
    <property type="entry name" value="aa-tRNA-synth_II"/>
</dbReference>
<dbReference type="InterPro" id="IPR045864">
    <property type="entry name" value="aa-tRNA-synth_II/BPL/LPL"/>
</dbReference>
<dbReference type="InterPro" id="IPR002317">
    <property type="entry name" value="Ser-tRNA-ligase_type_1"/>
</dbReference>
<dbReference type="InterPro" id="IPR015866">
    <property type="entry name" value="Ser-tRNA-synth_1_N"/>
</dbReference>
<dbReference type="InterPro" id="IPR042103">
    <property type="entry name" value="SerRS_1_N_sf"/>
</dbReference>
<dbReference type="InterPro" id="IPR033729">
    <property type="entry name" value="SerRS_core"/>
</dbReference>
<dbReference type="InterPro" id="IPR010978">
    <property type="entry name" value="tRNA-bd_arm"/>
</dbReference>
<dbReference type="NCBIfam" id="TIGR00414">
    <property type="entry name" value="serS"/>
    <property type="match status" value="1"/>
</dbReference>
<dbReference type="PANTHER" id="PTHR43697:SF1">
    <property type="entry name" value="SERINE--TRNA LIGASE"/>
    <property type="match status" value="1"/>
</dbReference>
<dbReference type="PANTHER" id="PTHR43697">
    <property type="entry name" value="SERYL-TRNA SYNTHETASE"/>
    <property type="match status" value="1"/>
</dbReference>
<dbReference type="Pfam" id="PF02403">
    <property type="entry name" value="Seryl_tRNA_N"/>
    <property type="match status" value="1"/>
</dbReference>
<dbReference type="Pfam" id="PF00587">
    <property type="entry name" value="tRNA-synt_2b"/>
    <property type="match status" value="1"/>
</dbReference>
<dbReference type="PIRSF" id="PIRSF001529">
    <property type="entry name" value="Ser-tRNA-synth_IIa"/>
    <property type="match status" value="1"/>
</dbReference>
<dbReference type="PRINTS" id="PR00981">
    <property type="entry name" value="TRNASYNTHSER"/>
</dbReference>
<dbReference type="SUPFAM" id="SSF55681">
    <property type="entry name" value="Class II aaRS and biotin synthetases"/>
    <property type="match status" value="1"/>
</dbReference>
<dbReference type="SUPFAM" id="SSF46589">
    <property type="entry name" value="tRNA-binding arm"/>
    <property type="match status" value="1"/>
</dbReference>
<dbReference type="PROSITE" id="PS50862">
    <property type="entry name" value="AA_TRNA_LIGASE_II"/>
    <property type="match status" value="1"/>
</dbReference>
<gene>
    <name evidence="1" type="primary">serS</name>
    <name type="ordered locus">SbBS512_E2435</name>
</gene>
<feature type="chain" id="PRO_1000098125" description="Serine--tRNA ligase">
    <location>
        <begin position="1"/>
        <end position="430"/>
    </location>
</feature>
<feature type="binding site" evidence="1">
    <location>
        <begin position="237"/>
        <end position="239"/>
    </location>
    <ligand>
        <name>L-serine</name>
        <dbReference type="ChEBI" id="CHEBI:33384"/>
    </ligand>
</feature>
<feature type="binding site" evidence="1">
    <location>
        <begin position="268"/>
        <end position="270"/>
    </location>
    <ligand>
        <name>ATP</name>
        <dbReference type="ChEBI" id="CHEBI:30616"/>
    </ligand>
</feature>
<feature type="binding site" evidence="1">
    <location>
        <position position="291"/>
    </location>
    <ligand>
        <name>L-serine</name>
        <dbReference type="ChEBI" id="CHEBI:33384"/>
    </ligand>
</feature>
<feature type="binding site" evidence="1">
    <location>
        <begin position="355"/>
        <end position="358"/>
    </location>
    <ligand>
        <name>ATP</name>
        <dbReference type="ChEBI" id="CHEBI:30616"/>
    </ligand>
</feature>
<feature type="binding site" evidence="1">
    <location>
        <position position="391"/>
    </location>
    <ligand>
        <name>L-serine</name>
        <dbReference type="ChEBI" id="CHEBI:33384"/>
    </ligand>
</feature>
<evidence type="ECO:0000255" key="1">
    <source>
        <dbReference type="HAMAP-Rule" id="MF_00176"/>
    </source>
</evidence>
<protein>
    <recommendedName>
        <fullName evidence="1">Serine--tRNA ligase</fullName>
        <ecNumber evidence="1">6.1.1.11</ecNumber>
    </recommendedName>
    <alternativeName>
        <fullName evidence="1">Seryl-tRNA synthetase</fullName>
        <shortName evidence="1">SerRS</shortName>
    </alternativeName>
    <alternativeName>
        <fullName evidence="1">Seryl-tRNA(Ser/Sec) synthetase</fullName>
    </alternativeName>
</protein>
<proteinExistence type="inferred from homology"/>
<comment type="function">
    <text evidence="1">Catalyzes the attachment of serine to tRNA(Ser). Is also able to aminoacylate tRNA(Sec) with serine, to form the misacylated tRNA L-seryl-tRNA(Sec), which will be further converted into selenocysteinyl-tRNA(Sec).</text>
</comment>
<comment type="catalytic activity">
    <reaction evidence="1">
        <text>tRNA(Ser) + L-serine + ATP = L-seryl-tRNA(Ser) + AMP + diphosphate + H(+)</text>
        <dbReference type="Rhea" id="RHEA:12292"/>
        <dbReference type="Rhea" id="RHEA-COMP:9669"/>
        <dbReference type="Rhea" id="RHEA-COMP:9703"/>
        <dbReference type="ChEBI" id="CHEBI:15378"/>
        <dbReference type="ChEBI" id="CHEBI:30616"/>
        <dbReference type="ChEBI" id="CHEBI:33019"/>
        <dbReference type="ChEBI" id="CHEBI:33384"/>
        <dbReference type="ChEBI" id="CHEBI:78442"/>
        <dbReference type="ChEBI" id="CHEBI:78533"/>
        <dbReference type="ChEBI" id="CHEBI:456215"/>
        <dbReference type="EC" id="6.1.1.11"/>
    </reaction>
</comment>
<comment type="catalytic activity">
    <reaction evidence="1">
        <text>tRNA(Sec) + L-serine + ATP = L-seryl-tRNA(Sec) + AMP + diphosphate + H(+)</text>
        <dbReference type="Rhea" id="RHEA:42580"/>
        <dbReference type="Rhea" id="RHEA-COMP:9742"/>
        <dbReference type="Rhea" id="RHEA-COMP:10128"/>
        <dbReference type="ChEBI" id="CHEBI:15378"/>
        <dbReference type="ChEBI" id="CHEBI:30616"/>
        <dbReference type="ChEBI" id="CHEBI:33019"/>
        <dbReference type="ChEBI" id="CHEBI:33384"/>
        <dbReference type="ChEBI" id="CHEBI:78442"/>
        <dbReference type="ChEBI" id="CHEBI:78533"/>
        <dbReference type="ChEBI" id="CHEBI:456215"/>
        <dbReference type="EC" id="6.1.1.11"/>
    </reaction>
</comment>
<comment type="pathway">
    <text evidence="1">Aminoacyl-tRNA biosynthesis; selenocysteinyl-tRNA(Sec) biosynthesis; L-seryl-tRNA(Sec) from L-serine and tRNA(Sec): step 1/1.</text>
</comment>
<comment type="subunit">
    <text evidence="1">Homodimer. The tRNA molecule binds across the dimer.</text>
</comment>
<comment type="subcellular location">
    <subcellularLocation>
        <location evidence="1">Cytoplasm</location>
    </subcellularLocation>
</comment>
<comment type="domain">
    <text evidence="1">Consists of two distinct domains, a catalytic core and a N-terminal extension that is involved in tRNA binding.</text>
</comment>
<comment type="similarity">
    <text evidence="1">Belongs to the class-II aminoacyl-tRNA synthetase family. Type-1 seryl-tRNA synthetase subfamily.</text>
</comment>
<name>SYS_SHIB3</name>
<reference key="1">
    <citation type="submission" date="2008-05" db="EMBL/GenBank/DDBJ databases">
        <title>Complete sequence of Shigella boydii serotype 18 strain BS512.</title>
        <authorList>
            <person name="Rasko D.A."/>
            <person name="Rosovitz M."/>
            <person name="Maurelli A.T."/>
            <person name="Myers G."/>
            <person name="Seshadri R."/>
            <person name="Cer R."/>
            <person name="Jiang L."/>
            <person name="Ravel J."/>
            <person name="Sebastian Y."/>
        </authorList>
    </citation>
    <scope>NUCLEOTIDE SEQUENCE [LARGE SCALE GENOMIC DNA]</scope>
    <source>
        <strain>CDC 3083-94 / BS512</strain>
    </source>
</reference>
<sequence length="430" mass="48404">MLDPNLLRNEPDAVAEKLARRGFKLDVDKLGALEERRKVLQVKTENLQAERNSRSKSIGQAKARGEDIESLRLEVNKLGEELDAAKAELDALQAEIRDIALTIPNLPADEVPVGKDENDNVEVSRWGTPREFDFEVRDHVTLGEMHSGLDFAAAVKLTGSRFVVMKGQIARMHRALSQFMLDLHTEQHGYSENYVPYLVNQDTLYGTGQLPKFAGDLFHTRPLEEEADTSNYALIPTAEVPLTNLVRGEIIDEDDLPIKMTAHTPCFRSEAGSYGRDTRGLIRMHQFDKVEMVQIVRPEDSMAALEEMTGHAEKVLQLLGLPYRKIILCTGDMGFGACKTYDLEVWIPAQNTYREISSCSNVWDFQARRMQARCRSKSDKKTRLVHTLNGSGLAVGRTLVAVMENYQQADGRIEVPEVLRPYMNGLEYIG</sequence>
<organism>
    <name type="scientific">Shigella boydii serotype 18 (strain CDC 3083-94 / BS512)</name>
    <dbReference type="NCBI Taxonomy" id="344609"/>
    <lineage>
        <taxon>Bacteria</taxon>
        <taxon>Pseudomonadati</taxon>
        <taxon>Pseudomonadota</taxon>
        <taxon>Gammaproteobacteria</taxon>
        <taxon>Enterobacterales</taxon>
        <taxon>Enterobacteriaceae</taxon>
        <taxon>Shigella</taxon>
    </lineage>
</organism>